<comment type="function">
    <text evidence="2">RNA-directed RNA polymerase that catalyzes the transcription of viral mRNAs, their capping and polyadenylation. The template is composed of the viral RNA tightly encapsidated by the nucleoprotein (N). The viral polymerase binds to the genomic RNA at the 3' leader promoter, and transcribes subsequently all viral mRNAs with a decreasing efficiency. The first gene is the most transcribed, and the last the least transcribed. The viral phosphoprotein acts as a processivity factor. Capping is concomitant with initiation of mRNA transcription. Indeed, a GDP polyribonucleotidyl transferase (PRNTase) adds the cap structure when the nascent RNA chain length has reached few nucleotides. Ribose 2'-O methylation of viral mRNA cap precedes and facilitates subsequent guanine-N-7 methylation, both activities being carried by the viral polymerase. Polyadenylation of mRNAs occur by a stuttering mechanism at a slipery stop site present at the end viral genes. After finishing transcription of a mRNA, the polymerase can resume transcription of the downstream gene.</text>
</comment>
<comment type="function">
    <text evidence="2">RNA-directed RNA polymerase that catalyzes the replication of viral genomic RNA. The template is composed of the viral RNA tightly encapsidated by the nucleoprotein (N). The replicase mode is dependent on intracellular N protein concentration. In this mode, the polymerase replicates the whole viral genome without recognizing transcriptional signals, and the replicated genome is not caped or polyadenylated.</text>
</comment>
<comment type="catalytic activity">
    <reaction evidence="4">
        <text>RNA(n) + a ribonucleoside 5'-triphosphate = RNA(n+1) + diphosphate</text>
        <dbReference type="Rhea" id="RHEA:21248"/>
        <dbReference type="Rhea" id="RHEA-COMP:14527"/>
        <dbReference type="Rhea" id="RHEA-COMP:17342"/>
        <dbReference type="ChEBI" id="CHEBI:33019"/>
        <dbReference type="ChEBI" id="CHEBI:61557"/>
        <dbReference type="ChEBI" id="CHEBI:140395"/>
        <dbReference type="EC" id="2.7.7.48"/>
    </reaction>
</comment>
<comment type="catalytic activity">
    <reaction evidence="2">
        <text>a 5'-end (5'-triphosphoguanosine)-adenylyl-adenylyl-cytidylyl-adenosine in mRNA + 2 S-adenosyl-L-methionine = a 5'-end (N(7)-methyl 5'-triphosphoguanosine)-(2'-O-methyladenylyl)-adenylyl-cytidylyl-adenosine in mRNA + 2 S-adenosyl-L-homocysteine + H(+)</text>
        <dbReference type="Rhea" id="RHEA:65376"/>
        <dbReference type="Rhea" id="RHEA-COMP:16797"/>
        <dbReference type="Rhea" id="RHEA-COMP:16798"/>
        <dbReference type="ChEBI" id="CHEBI:15378"/>
        <dbReference type="ChEBI" id="CHEBI:57856"/>
        <dbReference type="ChEBI" id="CHEBI:59789"/>
        <dbReference type="ChEBI" id="CHEBI:156483"/>
        <dbReference type="ChEBI" id="CHEBI:156484"/>
        <dbReference type="EC" id="2.1.1.375"/>
    </reaction>
</comment>
<comment type="catalytic activity">
    <reaction evidence="2">
        <text>a 5'-end (5'-triphosphoguanosine)-adenylyl-adenylyl-cytidylyl-adenosine in mRNA + S-adenosyl-L-methionine = a 5'-end (5'-triphosphoguanosine)-(2'-O-methyladenylyl)-adenylyl-cytidylyl-adenosine in mRNA + S-adenosyl-L-homocysteine + H(+)</text>
        <dbReference type="Rhea" id="RHEA:65380"/>
        <dbReference type="Rhea" id="RHEA-COMP:16797"/>
        <dbReference type="Rhea" id="RHEA-COMP:16801"/>
        <dbReference type="ChEBI" id="CHEBI:15378"/>
        <dbReference type="ChEBI" id="CHEBI:57856"/>
        <dbReference type="ChEBI" id="CHEBI:59789"/>
        <dbReference type="ChEBI" id="CHEBI:156482"/>
        <dbReference type="ChEBI" id="CHEBI:156484"/>
    </reaction>
</comment>
<comment type="catalytic activity">
    <reaction evidence="3">
        <text>a 5'-end triphospho-adenylyl-adenylyl-cytidylyl-adenosine in mRNA + GDP + H(+) = a 5'-end (5'-triphosphoguanosine)-adenylyl-adenylyl-cytidylyl-adenosine in mRNA + diphosphate</text>
        <dbReference type="Rhea" id="RHEA:65436"/>
        <dbReference type="Rhea" id="RHEA-COMP:16797"/>
        <dbReference type="Rhea" id="RHEA-COMP:16799"/>
        <dbReference type="ChEBI" id="CHEBI:15378"/>
        <dbReference type="ChEBI" id="CHEBI:33019"/>
        <dbReference type="ChEBI" id="CHEBI:58189"/>
        <dbReference type="ChEBI" id="CHEBI:156484"/>
        <dbReference type="ChEBI" id="CHEBI:156503"/>
        <dbReference type="EC" id="2.7.7.88"/>
    </reaction>
</comment>
<comment type="catalytic activity">
    <reaction evidence="2">
        <text>a 5'-end (5'-triphosphoguanosine)-(2'-O-methyladenylyl)-adenylyl-cytidylyl-adenosine in mRNA + S-adenosyl-L-methionine = a 5'-end (N(7)-methyl 5'-triphosphoguanosine)-(2'-O-methyladenylyl)-adenylyl-cytidylyl-adenosine in mRNA + S-adenosyl-L-homocysteine</text>
        <dbReference type="Rhea" id="RHEA:65440"/>
        <dbReference type="Rhea" id="RHEA-COMP:16798"/>
        <dbReference type="Rhea" id="RHEA-COMP:16801"/>
        <dbReference type="ChEBI" id="CHEBI:57856"/>
        <dbReference type="ChEBI" id="CHEBI:59789"/>
        <dbReference type="ChEBI" id="CHEBI:156482"/>
        <dbReference type="ChEBI" id="CHEBI:156483"/>
    </reaction>
</comment>
<comment type="catalytic activity">
    <reaction evidence="3">
        <text>GTP + H2O = GDP + phosphate + H(+)</text>
        <dbReference type="Rhea" id="RHEA:19669"/>
        <dbReference type="ChEBI" id="CHEBI:15377"/>
        <dbReference type="ChEBI" id="CHEBI:15378"/>
        <dbReference type="ChEBI" id="CHEBI:37565"/>
        <dbReference type="ChEBI" id="CHEBI:43474"/>
        <dbReference type="ChEBI" id="CHEBI:58189"/>
    </reaction>
</comment>
<comment type="subunit">
    <text evidence="2">May form homodimer. Interacts with the P protein.</text>
</comment>
<comment type="subcellular location">
    <subcellularLocation>
        <location evidence="2">Virion</location>
    </subcellularLocation>
    <subcellularLocation>
        <location evidence="2">Host cytoplasm</location>
    </subcellularLocation>
    <text evidence="2">L and P are packaged asymmetrically towards the blunt end of the virus.</text>
</comment>
<comment type="similarity">
    <text evidence="7">Belongs to the rhabdoviruses protein L family.</text>
</comment>
<accession>Q9QSP0</accession>
<gene>
    <name type="primary">L</name>
</gene>
<reference key="1">
    <citation type="journal article" date="2002" name="Virus Res.">
        <title>Characterisation of an Australian bat lyssavirus variant isolated from an insectivorous bat.</title>
        <authorList>
            <person name="Gould A.R."/>
            <person name="Kattenbelt J.A."/>
            <person name="Gumley S.G."/>
            <person name="Lunt R.A."/>
        </authorList>
    </citation>
    <scope>NUCLEOTIDE SEQUENCE [GENOMIC RNA]</scope>
</reference>
<sequence length="2128" mass="242984">MIDPGEVYDDPIDPVEPEPELKTNNAVIPNILRNSDYNLNSPLIEHPSRLMLEWLTTGNKPMRLTLTDNCIRSYKTLKCYFRKVDIGSVKVGGPAAQAMTSLWLHGEHSESNRSRKCLSDLTQFYQKSSPIEKLLNYTLGNRGLRIPPEGVLLCLKKVDYDRSFGRYLANIYSSYLFFHVIILYMNALDWDEEKTILALWRDLNSVDIKKDQVKFRDSIWGSLIVTKEFVYSQNSNCLFDRNYTLMLKDLFLSRFNSLLILLSPPEPRYSDDLISLLCQLYIAGDHVLSMCGNSGYDVIKMLEPYVINSLVQRAEEFRPLIHSLGDFPLFIREKVGQLEGTFGPSARRFFQVLDQVDNIHDLVFVYGCYRHWGHPYIDYRKGLLKLYDQVHVKKMIDGAYQECLASDLAKRILRWGFDKYSKWYLDPKLLAPDHPLAPYIKTQTWPPKHIVDLVGNTWHKLPITQIFEIPESMDPSEILDDKSHSFTRTKLASWLAENRGGPVPSEKVIITALSKPPVNPREFLKSIDLGGLPDDDLIIGLKPKERELKIEGRFFALMSWNLRLYFVITEKLLANYILPLFDALTMTDNLNKVFKKLIDRVTGQGLQDYSRVTYAFHLDYEKWNNHQRLESTKDVFPVLDQVFGLKKVFSRTHEFFQKSWIYYSDRSDLIGLWEDQIYCLDMSDGPTCWNGQDGGLEGLRQKGWSLVSLLMIDRESQTRNTRTKDFAQGDNQVLCPTYMLSSGLSHEGLLYELESISRNALSIYRAIEDGASKLGLIIKKEETMCSYDFLIYGKTPLFRGNILVPESKRWARVSCISNDQIVNLANIMSTVSTNALTVAQHSQSLIKPMRGFLLMAVQAVFHYLLFSPILKGRVYKILSAEGDDFLLAMSRIVYLDPSLGGVSGMSLGRFHIRQFSDPVSEGLSFWKEIWTSSSESWIHSLCQEAGNPDLGDRSLEKFTRLLEDPTTLNIRGGASPTILLKDAIRKALYDEVDKVENSEFREAILLSRHHRDNFILFLKSIEPLFPRFLSELFSSSFLGIPESIIGLIQNSRTIRRQFRRSLSRSLEESFYNSEIHGISRMTQVPQRIGRVWSCSSERAHLLREISWGRKRVGTTVPHPSEMLALLPKSSISCPCGLTGSENPRVSISVLPSIYQSFFSRGPLKGYLGSSTSMSTQTFHAWEKVTNVHVVKRALSLKESINWFISRNSNLAQTLIRNIISLTGPQFPLEEAPVFKRTGSALHRFKSARYSEGGYSSICPNLLSHISVSTDTMSDLTHDGRNFDFMFQPLMLYAQTWTSELVQKDIRLKDSTFHWHLRCPKCIRSIDDVILVHPQVFDFPDVSKRISRMVSGAVPSSQILPEVNLLPGHFESLCGRDKSRHIGSAQGLLYSILVATHDPGYNDGTIFPVNIYSKISPKDYLRGLARGILIGSSICLLTRMTNININRPLELISGVITYILLRLDNHPSLYVMLREPSLRSEIFSIPQKIPAAYPTTMKEGNRSVLCYLQHVLRYEREIITSSPENDWLWIFSDFRSMKMTYLTLITYQSHIFLQRIERSLSKKMRADLRQLSSLMRQVLGGHGEDTLDSGEDIQRLLRDAIQRTKWVDQEVRHAAKTMTNDHSPSKKTSRKVGCSEWICSAQQVSISTSSNPAPVSEMDVRTLSRKLQNPLISGLRVVQCATGAHYKLKPILDNLNTYPSFCLVVGDGSGGISRTVLNMFPDAKLVFNSLLEVSDLMASGTHPLPPSAIMSGGEDITSRVIDFESIWEKPSDLRNLSTWRYFQSVQSQLNMSYDLIICDAEVTDIASVNKITLLMSDFVLSIDGPVDLIFKSYGSMLVDPDYKAIQHLSRAFPQVTGYITQLTSSFSSELYLRFSKRGKFFRDAEYLTSSTLREMSLVLFNCSSPKSELQRARSLNYQDLVRGFPEEIVSNPYNEMIITLIDSEVESFLVHKMVDDLELQRGTLSRMSIIIAIVIVYSNRVFNVSKPLNDPLFYPPSDPKILRHFNICCSTMMYLSTVLGDVPNFARQHELYNGPITYYFKRQIIRGSIYLSWSWSDDTSVFKRVSCNSNLSLSSHWIRLIYKIVKTTRLTGSPVDLSKEVEKHLRGYNRWITLNDVKSRSSLLDYSCL</sequence>
<feature type="chain" id="PRO_0000294415" description="Large structural protein">
    <location>
        <begin position="1"/>
        <end position="2128"/>
    </location>
</feature>
<feature type="domain" description="RdRp catalytic" evidence="4">
    <location>
        <begin position="612"/>
        <end position="800"/>
    </location>
</feature>
<feature type="domain" description="Mononegavirus-type SAM-dependent 2'-O-MTase" evidence="5">
    <location>
        <begin position="1675"/>
        <end position="1872"/>
    </location>
</feature>
<feature type="region of interest" description="Disordered" evidence="6">
    <location>
        <begin position="1"/>
        <end position="20"/>
    </location>
</feature>
<feature type="region of interest" description="Interaction with P protein" evidence="1">
    <location>
        <begin position="1563"/>
        <end position="2128"/>
    </location>
</feature>
<feature type="compositionally biased region" description="Acidic residues" evidence="6">
    <location>
        <begin position="1"/>
        <end position="18"/>
    </location>
</feature>
<proteinExistence type="inferred from homology"/>
<name>L_ABLVB</name>
<dbReference type="EC" id="2.7.7.48" evidence="3"/>
<dbReference type="EC" id="3.6.1.-" evidence="2"/>
<dbReference type="EC" id="2.7.7.88" evidence="2"/>
<dbReference type="EC" id="2.1.1.375" evidence="2"/>
<dbReference type="EMBL" id="AF081020">
    <property type="protein sequence ID" value="AAD47900.2"/>
    <property type="molecule type" value="Genomic_RNA"/>
</dbReference>
<dbReference type="RefSeq" id="NP_478343.1">
    <property type="nucleotide sequence ID" value="NC_003243.1"/>
</dbReference>
<dbReference type="SMR" id="Q9QSP0"/>
<dbReference type="GeneID" id="926729"/>
<dbReference type="KEGG" id="vg:926729"/>
<dbReference type="Proteomes" id="UP000006934">
    <property type="component" value="Segment"/>
</dbReference>
<dbReference type="GO" id="GO:0030430">
    <property type="term" value="C:host cell cytoplasm"/>
    <property type="evidence" value="ECO:0007669"/>
    <property type="project" value="UniProtKB-SubCell"/>
</dbReference>
<dbReference type="GO" id="GO:0044423">
    <property type="term" value="C:virion component"/>
    <property type="evidence" value="ECO:0007669"/>
    <property type="project" value="UniProtKB-KW"/>
</dbReference>
<dbReference type="GO" id="GO:0005524">
    <property type="term" value="F:ATP binding"/>
    <property type="evidence" value="ECO:0007669"/>
    <property type="project" value="UniProtKB-KW"/>
</dbReference>
<dbReference type="GO" id="GO:0003924">
    <property type="term" value="F:GTPase activity"/>
    <property type="evidence" value="ECO:0007669"/>
    <property type="project" value="RHEA"/>
</dbReference>
<dbReference type="GO" id="GO:0004482">
    <property type="term" value="F:mRNA 5'-cap (guanine-N7-)-methyltransferase activity"/>
    <property type="evidence" value="ECO:0007669"/>
    <property type="project" value="InterPro"/>
</dbReference>
<dbReference type="GO" id="GO:0003968">
    <property type="term" value="F:RNA-directed RNA polymerase activity"/>
    <property type="evidence" value="ECO:0007669"/>
    <property type="project" value="UniProtKB-KW"/>
</dbReference>
<dbReference type="GO" id="GO:0039689">
    <property type="term" value="P:negative stranded viral RNA replication"/>
    <property type="evidence" value="ECO:0000250"/>
    <property type="project" value="UniProtKB"/>
</dbReference>
<dbReference type="InterPro" id="IPR039530">
    <property type="entry name" value="L_methyltransferase_rhabdo"/>
</dbReference>
<dbReference type="InterPro" id="IPR039736">
    <property type="entry name" value="L_poly_C"/>
</dbReference>
<dbReference type="InterPro" id="IPR048398">
    <property type="entry name" value="Methyltrans_Mon_C"/>
</dbReference>
<dbReference type="InterPro" id="IPR048397">
    <property type="entry name" value="Methyltrans_Mon_CD"/>
</dbReference>
<dbReference type="InterPro" id="IPR026890">
    <property type="entry name" value="Mononeg_mRNAcap"/>
</dbReference>
<dbReference type="InterPro" id="IPR014023">
    <property type="entry name" value="Mononeg_RNA_pol_cat"/>
</dbReference>
<dbReference type="InterPro" id="IPR025786">
    <property type="entry name" value="Mononega_L_MeTrfase"/>
</dbReference>
<dbReference type="InterPro" id="IPR017234">
    <property type="entry name" value="RNA-dir_pol_rhabdovirus"/>
</dbReference>
<dbReference type="NCBIfam" id="TIGR04198">
    <property type="entry name" value="paramyx_RNAcap"/>
    <property type="match status" value="1"/>
</dbReference>
<dbReference type="Pfam" id="PF21080">
    <property type="entry name" value="Methyltrans_Mon_1st"/>
    <property type="match status" value="1"/>
</dbReference>
<dbReference type="Pfam" id="PF14314">
    <property type="entry name" value="Methyltrans_Mon_2nd"/>
    <property type="match status" value="1"/>
</dbReference>
<dbReference type="Pfam" id="PF21081">
    <property type="entry name" value="Methyltrans_Mon_3rd"/>
    <property type="match status" value="1"/>
</dbReference>
<dbReference type="Pfam" id="PF14318">
    <property type="entry name" value="Mononeg_mRNAcap"/>
    <property type="match status" value="1"/>
</dbReference>
<dbReference type="Pfam" id="PF00946">
    <property type="entry name" value="Mononeg_RNA_pol"/>
    <property type="match status" value="1"/>
</dbReference>
<dbReference type="PIRSF" id="PIRSF037546">
    <property type="entry name" value="RNA_pol_RhabdoV_sub"/>
    <property type="match status" value="1"/>
</dbReference>
<dbReference type="PROSITE" id="PS50526">
    <property type="entry name" value="RDRP_SSRNA_NEG_NONSEG"/>
    <property type="match status" value="1"/>
</dbReference>
<dbReference type="PROSITE" id="PS51590">
    <property type="entry name" value="SAM_MT_MNV_L"/>
    <property type="match status" value="1"/>
</dbReference>
<organism>
    <name type="scientific">Australian bat lyssavirus (isolate Bat/AUS/1996)</name>
    <name type="common">ABLV</name>
    <dbReference type="NCBI Taxonomy" id="446561"/>
    <lineage>
        <taxon>Viruses</taxon>
        <taxon>Riboviria</taxon>
        <taxon>Orthornavirae</taxon>
        <taxon>Negarnaviricota</taxon>
        <taxon>Haploviricotina</taxon>
        <taxon>Monjiviricetes</taxon>
        <taxon>Mononegavirales</taxon>
        <taxon>Rhabdoviridae</taxon>
        <taxon>Alpharhabdovirinae</taxon>
        <taxon>Lyssavirus</taxon>
        <taxon>Lyssavirus australis</taxon>
    </lineage>
</organism>
<protein>
    <recommendedName>
        <fullName>Large structural protein</fullName>
        <shortName>Protein L</shortName>
    </recommendedName>
    <alternativeName>
        <fullName>Replicase</fullName>
    </alternativeName>
    <alternativeName>
        <fullName>Transcriptase</fullName>
    </alternativeName>
    <domain>
        <recommendedName>
            <fullName>RNA-directed RNA polymerase</fullName>
            <ecNumber evidence="3">2.7.7.48</ecNumber>
        </recommendedName>
    </domain>
    <domain>
        <recommendedName>
            <fullName evidence="2">GTP phosphohydrolase</fullName>
            <ecNumber evidence="2">3.6.1.-</ecNumber>
        </recommendedName>
    </domain>
    <domain>
        <recommendedName>
            <fullName evidence="7">GDP polyribonucleotidyltransferase</fullName>
            <ecNumber evidence="2">2.7.7.88</ecNumber>
        </recommendedName>
        <alternativeName>
            <fullName evidence="7">PRNTase</fullName>
        </alternativeName>
    </domain>
    <domain>
        <recommendedName>
            <fullName evidence="7">mRNA cap methyltransferase</fullName>
            <ecNumber evidence="2">2.1.1.375</ecNumber>
        </recommendedName>
        <alternativeName>
            <fullName evidence="2">mRNA (guanine-N(7)-)-methyltransferase</fullName>
            <shortName evidence="2">G-N7-MTase</shortName>
        </alternativeName>
        <alternativeName>
            <fullName evidence="2">mRNA (nucleoside-2'-O-)-methyltransferase</fullName>
            <shortName evidence="2">N1-2'-O-MTase</shortName>
        </alternativeName>
    </domain>
</protein>
<organismHost>
    <name type="scientific">Homo sapiens</name>
    <name type="common">Human</name>
    <dbReference type="NCBI Taxonomy" id="9606"/>
</organismHost>
<organismHost>
    <name type="scientific">Pteropus alecto</name>
    <name type="common">Black flying fox</name>
    <dbReference type="NCBI Taxonomy" id="9402"/>
</organismHost>
<organismHost>
    <name type="scientific">Pteropus conspicillatus</name>
    <name type="common">Spectacled flying fox</name>
    <dbReference type="NCBI Taxonomy" id="328804"/>
</organismHost>
<organismHost>
    <name type="scientific">Pteropus poliocephalus</name>
    <name type="common">Grey-headed flying fox</name>
    <dbReference type="NCBI Taxonomy" id="9403"/>
</organismHost>
<organismHost>
    <name type="scientific">Pteropus scapulatus</name>
    <name type="common">Little red flying fox</name>
    <dbReference type="NCBI Taxonomy" id="94117"/>
</organismHost>
<organismHost>
    <name type="scientific">Saccolaimus</name>
    <dbReference type="NCBI Taxonomy" id="446909"/>
</organismHost>
<evidence type="ECO:0000250" key="1"/>
<evidence type="ECO:0000250" key="2">
    <source>
        <dbReference type="UniProtKB" id="P03523"/>
    </source>
</evidence>
<evidence type="ECO:0000250" key="3">
    <source>
        <dbReference type="UniProtKB" id="P28887"/>
    </source>
</evidence>
<evidence type="ECO:0000255" key="4">
    <source>
        <dbReference type="PROSITE-ProRule" id="PRU00539"/>
    </source>
</evidence>
<evidence type="ECO:0000255" key="5">
    <source>
        <dbReference type="PROSITE-ProRule" id="PRU00923"/>
    </source>
</evidence>
<evidence type="ECO:0000256" key="6">
    <source>
        <dbReference type="SAM" id="MobiDB-lite"/>
    </source>
</evidence>
<evidence type="ECO:0000305" key="7"/>
<keyword id="KW-0067">ATP-binding</keyword>
<keyword id="KW-1035">Host cytoplasm</keyword>
<keyword id="KW-0378">Hydrolase</keyword>
<keyword id="KW-0489">Methyltransferase</keyword>
<keyword id="KW-0506">mRNA capping</keyword>
<keyword id="KW-0507">mRNA processing</keyword>
<keyword id="KW-0511">Multifunctional enzyme</keyword>
<keyword id="KW-0547">Nucleotide-binding</keyword>
<keyword id="KW-0548">Nucleotidyltransferase</keyword>
<keyword id="KW-1185">Reference proteome</keyword>
<keyword id="KW-0696">RNA-directed RNA polymerase</keyword>
<keyword id="KW-0949">S-adenosyl-L-methionine</keyword>
<keyword id="KW-0808">Transferase</keyword>
<keyword id="KW-0693">Viral RNA replication</keyword>
<keyword id="KW-0946">Virion</keyword>